<reference key="1">
    <citation type="journal article" date="2011" name="J. Bacteriol.">
        <title>Comparative genomics of 28 Salmonella enterica isolates: evidence for CRISPR-mediated adaptive sublineage evolution.</title>
        <authorList>
            <person name="Fricke W.F."/>
            <person name="Mammel M.K."/>
            <person name="McDermott P.F."/>
            <person name="Tartera C."/>
            <person name="White D.G."/>
            <person name="Leclerc J.E."/>
            <person name="Ravel J."/>
            <person name="Cebula T.A."/>
        </authorList>
    </citation>
    <scope>NUCLEOTIDE SEQUENCE [LARGE SCALE GENOMIC DNA]</scope>
    <source>
        <strain>CT_02021853</strain>
    </source>
</reference>
<dbReference type="EC" id="3.6.1.-" evidence="1"/>
<dbReference type="EMBL" id="CP001144">
    <property type="protein sequence ID" value="ACH74956.1"/>
    <property type="molecule type" value="Genomic_DNA"/>
</dbReference>
<dbReference type="RefSeq" id="WP_000041953.1">
    <property type="nucleotide sequence ID" value="NC_011205.1"/>
</dbReference>
<dbReference type="SMR" id="B5FRL9"/>
<dbReference type="KEGG" id="sed:SeD_A4746"/>
<dbReference type="HOGENOM" id="CLU_033617_2_0_6"/>
<dbReference type="Proteomes" id="UP000008322">
    <property type="component" value="Chromosome"/>
</dbReference>
<dbReference type="GO" id="GO:0005737">
    <property type="term" value="C:cytoplasm"/>
    <property type="evidence" value="ECO:0007669"/>
    <property type="project" value="UniProtKB-SubCell"/>
</dbReference>
<dbReference type="GO" id="GO:0005525">
    <property type="term" value="F:GTP binding"/>
    <property type="evidence" value="ECO:0007669"/>
    <property type="project" value="UniProtKB-UniRule"/>
</dbReference>
<dbReference type="GO" id="GO:0003924">
    <property type="term" value="F:GTPase activity"/>
    <property type="evidence" value="ECO:0007669"/>
    <property type="project" value="UniProtKB-UniRule"/>
</dbReference>
<dbReference type="GO" id="GO:0046872">
    <property type="term" value="F:metal ion binding"/>
    <property type="evidence" value="ECO:0007669"/>
    <property type="project" value="UniProtKB-KW"/>
</dbReference>
<dbReference type="GO" id="GO:0019843">
    <property type="term" value="F:rRNA binding"/>
    <property type="evidence" value="ECO:0007669"/>
    <property type="project" value="UniProtKB-KW"/>
</dbReference>
<dbReference type="GO" id="GO:0042274">
    <property type="term" value="P:ribosomal small subunit biogenesis"/>
    <property type="evidence" value="ECO:0007669"/>
    <property type="project" value="UniProtKB-UniRule"/>
</dbReference>
<dbReference type="CDD" id="cd01854">
    <property type="entry name" value="YjeQ_EngC"/>
    <property type="match status" value="1"/>
</dbReference>
<dbReference type="FunFam" id="1.10.40.50:FF:000001">
    <property type="entry name" value="Small ribosomal subunit biogenesis GTPase RsgA"/>
    <property type="match status" value="1"/>
</dbReference>
<dbReference type="FunFam" id="3.40.50.300:FF:000389">
    <property type="entry name" value="Small ribosomal subunit biogenesis GTPase RsgA"/>
    <property type="match status" value="1"/>
</dbReference>
<dbReference type="Gene3D" id="2.40.50.140">
    <property type="entry name" value="Nucleic acid-binding proteins"/>
    <property type="match status" value="1"/>
</dbReference>
<dbReference type="Gene3D" id="3.40.50.300">
    <property type="entry name" value="P-loop containing nucleotide triphosphate hydrolases"/>
    <property type="match status" value="1"/>
</dbReference>
<dbReference type="Gene3D" id="1.10.40.50">
    <property type="entry name" value="Probable gtpase engc, domain 3"/>
    <property type="match status" value="1"/>
</dbReference>
<dbReference type="HAMAP" id="MF_01820">
    <property type="entry name" value="GTPase_RsgA"/>
    <property type="match status" value="1"/>
</dbReference>
<dbReference type="InterPro" id="IPR030378">
    <property type="entry name" value="G_CP_dom"/>
</dbReference>
<dbReference type="InterPro" id="IPR012340">
    <property type="entry name" value="NA-bd_OB-fold"/>
</dbReference>
<dbReference type="InterPro" id="IPR027417">
    <property type="entry name" value="P-loop_NTPase"/>
</dbReference>
<dbReference type="InterPro" id="IPR004881">
    <property type="entry name" value="Ribosome_biogen_GTPase_RsgA"/>
</dbReference>
<dbReference type="InterPro" id="IPR010914">
    <property type="entry name" value="RsgA_GTPase_dom"/>
</dbReference>
<dbReference type="NCBIfam" id="NF008931">
    <property type="entry name" value="PRK12288.1"/>
    <property type="match status" value="1"/>
</dbReference>
<dbReference type="NCBIfam" id="TIGR00157">
    <property type="entry name" value="ribosome small subunit-dependent GTPase A"/>
    <property type="match status" value="1"/>
</dbReference>
<dbReference type="PANTHER" id="PTHR32120">
    <property type="entry name" value="SMALL RIBOSOMAL SUBUNIT BIOGENESIS GTPASE RSGA"/>
    <property type="match status" value="1"/>
</dbReference>
<dbReference type="PANTHER" id="PTHR32120:SF11">
    <property type="entry name" value="SMALL RIBOSOMAL SUBUNIT BIOGENESIS GTPASE RSGA 1, MITOCHONDRIAL-RELATED"/>
    <property type="match status" value="1"/>
</dbReference>
<dbReference type="Pfam" id="PF03193">
    <property type="entry name" value="RsgA_GTPase"/>
    <property type="match status" value="1"/>
</dbReference>
<dbReference type="SUPFAM" id="SSF52540">
    <property type="entry name" value="P-loop containing nucleoside triphosphate hydrolases"/>
    <property type="match status" value="1"/>
</dbReference>
<dbReference type="PROSITE" id="PS50936">
    <property type="entry name" value="ENGC_GTPASE"/>
    <property type="match status" value="1"/>
</dbReference>
<dbReference type="PROSITE" id="PS51721">
    <property type="entry name" value="G_CP"/>
    <property type="match status" value="1"/>
</dbReference>
<proteinExistence type="inferred from homology"/>
<sequence>MSKNKLSKGQQRRVNANHQRRLKTSAEKADYDDNLFGEPAEGIVISRLGMHADVESADGEVHRCNIRRTIRSLVTGDRVVWRPGKAAAEGVNVKGIVEAVHERTSVLTRPDFYDGVKPIAANIDQIVIVSAILPELSLNIIDRYLVGCETLQVEPLIVLNKIDLLDDEGMDFVNEQMDIYRNIGYRVLMVSSHTQDGLKPLEEALTGRISIFAGQSGVGKSSLLNALLGLQNEILTNDVSNVSGLGQHTTTAARLYHFPHGGDVIDSPGVREFGLWHLEPEQITQGFVEFHDYLGHCKYRDCKHDADPGCAIREAVENGAIAETRFENYHRILESMAQVKTRKNFSDTDD</sequence>
<feature type="chain" id="PRO_1000188133" description="Small ribosomal subunit biogenesis GTPase RsgA">
    <location>
        <begin position="1"/>
        <end position="350"/>
    </location>
</feature>
<feature type="domain" description="CP-type G" evidence="2">
    <location>
        <begin position="104"/>
        <end position="273"/>
    </location>
</feature>
<feature type="region of interest" description="Disordered" evidence="3">
    <location>
        <begin position="1"/>
        <end position="27"/>
    </location>
</feature>
<feature type="compositionally biased region" description="Polar residues" evidence="3">
    <location>
        <begin position="1"/>
        <end position="17"/>
    </location>
</feature>
<feature type="binding site" evidence="1">
    <location>
        <begin position="160"/>
        <end position="163"/>
    </location>
    <ligand>
        <name>GTP</name>
        <dbReference type="ChEBI" id="CHEBI:37565"/>
    </ligand>
</feature>
<feature type="binding site" evidence="1">
    <location>
        <begin position="214"/>
        <end position="222"/>
    </location>
    <ligand>
        <name>GTP</name>
        <dbReference type="ChEBI" id="CHEBI:37565"/>
    </ligand>
</feature>
<feature type="binding site" evidence="1">
    <location>
        <position position="297"/>
    </location>
    <ligand>
        <name>Zn(2+)</name>
        <dbReference type="ChEBI" id="CHEBI:29105"/>
    </ligand>
</feature>
<feature type="binding site" evidence="1">
    <location>
        <position position="302"/>
    </location>
    <ligand>
        <name>Zn(2+)</name>
        <dbReference type="ChEBI" id="CHEBI:29105"/>
    </ligand>
</feature>
<feature type="binding site" evidence="1">
    <location>
        <position position="304"/>
    </location>
    <ligand>
        <name>Zn(2+)</name>
        <dbReference type="ChEBI" id="CHEBI:29105"/>
    </ligand>
</feature>
<feature type="binding site" evidence="1">
    <location>
        <position position="310"/>
    </location>
    <ligand>
        <name>Zn(2+)</name>
        <dbReference type="ChEBI" id="CHEBI:29105"/>
    </ligand>
</feature>
<evidence type="ECO:0000255" key="1">
    <source>
        <dbReference type="HAMAP-Rule" id="MF_01820"/>
    </source>
</evidence>
<evidence type="ECO:0000255" key="2">
    <source>
        <dbReference type="PROSITE-ProRule" id="PRU01058"/>
    </source>
</evidence>
<evidence type="ECO:0000256" key="3">
    <source>
        <dbReference type="SAM" id="MobiDB-lite"/>
    </source>
</evidence>
<protein>
    <recommendedName>
        <fullName evidence="1">Small ribosomal subunit biogenesis GTPase RsgA</fullName>
        <ecNumber evidence="1">3.6.1.-</ecNumber>
    </recommendedName>
</protein>
<accession>B5FRL9</accession>
<keyword id="KW-0963">Cytoplasm</keyword>
<keyword id="KW-0342">GTP-binding</keyword>
<keyword id="KW-0378">Hydrolase</keyword>
<keyword id="KW-0479">Metal-binding</keyword>
<keyword id="KW-0547">Nucleotide-binding</keyword>
<keyword id="KW-0690">Ribosome biogenesis</keyword>
<keyword id="KW-0694">RNA-binding</keyword>
<keyword id="KW-0699">rRNA-binding</keyword>
<keyword id="KW-0862">Zinc</keyword>
<gene>
    <name evidence="1" type="primary">rsgA</name>
    <name type="ordered locus">SeD_A4746</name>
</gene>
<name>RSGA_SALDC</name>
<organism>
    <name type="scientific">Salmonella dublin (strain CT_02021853)</name>
    <dbReference type="NCBI Taxonomy" id="439851"/>
    <lineage>
        <taxon>Bacteria</taxon>
        <taxon>Pseudomonadati</taxon>
        <taxon>Pseudomonadota</taxon>
        <taxon>Gammaproteobacteria</taxon>
        <taxon>Enterobacterales</taxon>
        <taxon>Enterobacteriaceae</taxon>
        <taxon>Salmonella</taxon>
    </lineage>
</organism>
<comment type="function">
    <text evidence="1">One of several proteins that assist in the late maturation steps of the functional core of the 30S ribosomal subunit. Helps release RbfA from mature subunits. May play a role in the assembly of ribosomal proteins into the subunit. Circularly permuted GTPase that catalyzes slow GTP hydrolysis, GTPase activity is stimulated by the 30S ribosomal subunit.</text>
</comment>
<comment type="cofactor">
    <cofactor evidence="1">
        <name>Zn(2+)</name>
        <dbReference type="ChEBI" id="CHEBI:29105"/>
    </cofactor>
    <text evidence="1">Binds 1 zinc ion per subunit.</text>
</comment>
<comment type="subunit">
    <text evidence="1">Monomer. Associates with 30S ribosomal subunit, binds 16S rRNA.</text>
</comment>
<comment type="subcellular location">
    <subcellularLocation>
        <location evidence="1">Cytoplasm</location>
    </subcellularLocation>
</comment>
<comment type="similarity">
    <text evidence="1">Belongs to the TRAFAC class YlqF/YawG GTPase family. RsgA subfamily.</text>
</comment>